<name>GAL1_ECOK1</name>
<gene>
    <name evidence="1" type="primary">galK</name>
    <name type="ordered locus">Ecok1_06460</name>
    <name type="ORF">APECO1_1331</name>
</gene>
<keyword id="KW-0067">ATP-binding</keyword>
<keyword id="KW-0119">Carbohydrate metabolism</keyword>
<keyword id="KW-0963">Cytoplasm</keyword>
<keyword id="KW-0299">Galactose metabolism</keyword>
<keyword id="KW-0418">Kinase</keyword>
<keyword id="KW-0460">Magnesium</keyword>
<keyword id="KW-0479">Metal-binding</keyword>
<keyword id="KW-0547">Nucleotide-binding</keyword>
<keyword id="KW-1185">Reference proteome</keyword>
<keyword id="KW-0808">Transferase</keyword>
<sequence>MSLKEKTQSLFANAFGYPATHTIQAPGRVNLIGEHTDYNDGFVLPCAIDYQTVISCAPRDDRKVRVMAADYENQLDEFSLDAPIVAHENYQWANYVRGVVKHLQLRNNSFGGVDMVISGNVPQGAGLSSSASLEVAVGTVLQQLYHLPLDGAQIALNGQEAENQFVGCNCGIMDQLISALGKKDHALLIDCRSLGTKAVSMPKGVAVVIINSNFKRTLVGSEYNTRREQCETGARFFQQPALRDVTIEEFNAVAHELDPIVAKRVRHILTENARTVEAASALEQGDLKRMGELMAESHASMRDDFEITVPQIDTLVEIVKAVIGDKGGVRMTGGGFGGCIVALFPEELVPAVQQAVAEQYEAKTGIKETFYVCKPSQGAGQC</sequence>
<comment type="function">
    <text evidence="1">Catalyzes the transfer of the gamma-phosphate of ATP to D-galactose to form alpha-D-galactose-1-phosphate (Gal-1-P).</text>
</comment>
<comment type="catalytic activity">
    <reaction evidence="1">
        <text>alpha-D-galactose + ATP = alpha-D-galactose 1-phosphate + ADP + H(+)</text>
        <dbReference type="Rhea" id="RHEA:13553"/>
        <dbReference type="ChEBI" id="CHEBI:15378"/>
        <dbReference type="ChEBI" id="CHEBI:28061"/>
        <dbReference type="ChEBI" id="CHEBI:30616"/>
        <dbReference type="ChEBI" id="CHEBI:58336"/>
        <dbReference type="ChEBI" id="CHEBI:456216"/>
        <dbReference type="EC" id="2.7.1.6"/>
    </reaction>
</comment>
<comment type="pathway">
    <text evidence="1">Carbohydrate metabolism; galactose metabolism.</text>
</comment>
<comment type="subcellular location">
    <subcellularLocation>
        <location evidence="1">Cytoplasm</location>
    </subcellularLocation>
</comment>
<comment type="similarity">
    <text evidence="1">Belongs to the GHMP kinase family. GalK subfamily.</text>
</comment>
<reference key="1">
    <citation type="journal article" date="2007" name="J. Bacteriol.">
        <title>The genome sequence of avian pathogenic Escherichia coli strain O1:K1:H7 shares strong similarities with human extraintestinal pathogenic E. coli genomes.</title>
        <authorList>
            <person name="Johnson T.J."/>
            <person name="Kariyawasam S."/>
            <person name="Wannemuehler Y."/>
            <person name="Mangiamele P."/>
            <person name="Johnson S.J."/>
            <person name="Doetkott C."/>
            <person name="Skyberg J.A."/>
            <person name="Lynne A.M."/>
            <person name="Johnson J.R."/>
            <person name="Nolan L.K."/>
        </authorList>
    </citation>
    <scope>NUCLEOTIDE SEQUENCE [LARGE SCALE GENOMIC DNA]</scope>
</reference>
<dbReference type="EC" id="2.7.1.6" evidence="1"/>
<dbReference type="EMBL" id="CP000468">
    <property type="protein sequence ID" value="ABJ00140.1"/>
    <property type="molecule type" value="Genomic_DNA"/>
</dbReference>
<dbReference type="RefSeq" id="WP_000053414.1">
    <property type="nucleotide sequence ID" value="NZ_CADILS010000026.1"/>
</dbReference>
<dbReference type="SMR" id="A1A900"/>
<dbReference type="KEGG" id="ecv:APECO1_1331"/>
<dbReference type="HOGENOM" id="CLU_017814_2_1_6"/>
<dbReference type="UniPathway" id="UPA00214"/>
<dbReference type="Proteomes" id="UP000008216">
    <property type="component" value="Chromosome"/>
</dbReference>
<dbReference type="GO" id="GO:0005829">
    <property type="term" value="C:cytosol"/>
    <property type="evidence" value="ECO:0007669"/>
    <property type="project" value="TreeGrafter"/>
</dbReference>
<dbReference type="GO" id="GO:0005524">
    <property type="term" value="F:ATP binding"/>
    <property type="evidence" value="ECO:0007669"/>
    <property type="project" value="UniProtKB-UniRule"/>
</dbReference>
<dbReference type="GO" id="GO:0004335">
    <property type="term" value="F:galactokinase activity"/>
    <property type="evidence" value="ECO:0007669"/>
    <property type="project" value="UniProtKB-UniRule"/>
</dbReference>
<dbReference type="GO" id="GO:0000287">
    <property type="term" value="F:magnesium ion binding"/>
    <property type="evidence" value="ECO:0007669"/>
    <property type="project" value="UniProtKB-UniRule"/>
</dbReference>
<dbReference type="GO" id="GO:0006012">
    <property type="term" value="P:galactose metabolic process"/>
    <property type="evidence" value="ECO:0007669"/>
    <property type="project" value="UniProtKB-UniRule"/>
</dbReference>
<dbReference type="FunFam" id="3.30.230.10:FF:000017">
    <property type="entry name" value="Galactokinase"/>
    <property type="match status" value="1"/>
</dbReference>
<dbReference type="FunFam" id="3.30.70.890:FF:000001">
    <property type="entry name" value="Galactokinase"/>
    <property type="match status" value="1"/>
</dbReference>
<dbReference type="Gene3D" id="3.30.230.10">
    <property type="match status" value="1"/>
</dbReference>
<dbReference type="Gene3D" id="3.30.70.890">
    <property type="entry name" value="GHMP kinase, C-terminal domain"/>
    <property type="match status" value="1"/>
</dbReference>
<dbReference type="HAMAP" id="MF_00246">
    <property type="entry name" value="Galactokinase"/>
    <property type="match status" value="1"/>
</dbReference>
<dbReference type="InterPro" id="IPR000705">
    <property type="entry name" value="Galactokinase"/>
</dbReference>
<dbReference type="InterPro" id="IPR022963">
    <property type="entry name" value="Galactokinase_bac"/>
</dbReference>
<dbReference type="InterPro" id="IPR019741">
    <property type="entry name" value="Galactokinase_CS"/>
</dbReference>
<dbReference type="InterPro" id="IPR019539">
    <property type="entry name" value="GalKase_N"/>
</dbReference>
<dbReference type="InterPro" id="IPR013750">
    <property type="entry name" value="GHMP_kinase_C_dom"/>
</dbReference>
<dbReference type="InterPro" id="IPR036554">
    <property type="entry name" value="GHMP_kinase_C_sf"/>
</dbReference>
<dbReference type="InterPro" id="IPR006204">
    <property type="entry name" value="GHMP_kinase_N_dom"/>
</dbReference>
<dbReference type="InterPro" id="IPR006203">
    <property type="entry name" value="GHMP_knse_ATP-bd_CS"/>
</dbReference>
<dbReference type="InterPro" id="IPR006206">
    <property type="entry name" value="Mevalonate/galactokinase"/>
</dbReference>
<dbReference type="InterPro" id="IPR020568">
    <property type="entry name" value="Ribosomal_Su5_D2-typ_SF"/>
</dbReference>
<dbReference type="InterPro" id="IPR014721">
    <property type="entry name" value="Ribsml_uS5_D2-typ_fold_subgr"/>
</dbReference>
<dbReference type="NCBIfam" id="TIGR00131">
    <property type="entry name" value="gal_kin"/>
    <property type="match status" value="1"/>
</dbReference>
<dbReference type="NCBIfam" id="NF003472">
    <property type="entry name" value="PRK05101.1"/>
    <property type="match status" value="1"/>
</dbReference>
<dbReference type="PANTHER" id="PTHR10457:SF7">
    <property type="entry name" value="GALACTOKINASE-RELATED"/>
    <property type="match status" value="1"/>
</dbReference>
<dbReference type="PANTHER" id="PTHR10457">
    <property type="entry name" value="MEVALONATE KINASE/GALACTOKINASE"/>
    <property type="match status" value="1"/>
</dbReference>
<dbReference type="Pfam" id="PF10509">
    <property type="entry name" value="GalKase_gal_bdg"/>
    <property type="match status" value="1"/>
</dbReference>
<dbReference type="Pfam" id="PF08544">
    <property type="entry name" value="GHMP_kinases_C"/>
    <property type="match status" value="1"/>
</dbReference>
<dbReference type="Pfam" id="PF00288">
    <property type="entry name" value="GHMP_kinases_N"/>
    <property type="match status" value="1"/>
</dbReference>
<dbReference type="PIRSF" id="PIRSF000530">
    <property type="entry name" value="Galactokinase"/>
    <property type="match status" value="1"/>
</dbReference>
<dbReference type="PRINTS" id="PR00473">
    <property type="entry name" value="GALCTOKINASE"/>
</dbReference>
<dbReference type="PRINTS" id="PR00959">
    <property type="entry name" value="MEVGALKINASE"/>
</dbReference>
<dbReference type="SUPFAM" id="SSF55060">
    <property type="entry name" value="GHMP Kinase, C-terminal domain"/>
    <property type="match status" value="1"/>
</dbReference>
<dbReference type="SUPFAM" id="SSF54211">
    <property type="entry name" value="Ribosomal protein S5 domain 2-like"/>
    <property type="match status" value="1"/>
</dbReference>
<dbReference type="PROSITE" id="PS00106">
    <property type="entry name" value="GALACTOKINASE"/>
    <property type="match status" value="1"/>
</dbReference>
<dbReference type="PROSITE" id="PS00627">
    <property type="entry name" value="GHMP_KINASES_ATP"/>
    <property type="match status" value="1"/>
</dbReference>
<protein>
    <recommendedName>
        <fullName evidence="1">Galactokinase</fullName>
        <ecNumber evidence="1">2.7.1.6</ecNumber>
    </recommendedName>
    <alternativeName>
        <fullName evidence="1">Galactose kinase</fullName>
    </alternativeName>
</protein>
<accession>A1A900</accession>
<organism>
    <name type="scientific">Escherichia coli O1:K1 / APEC</name>
    <dbReference type="NCBI Taxonomy" id="405955"/>
    <lineage>
        <taxon>Bacteria</taxon>
        <taxon>Pseudomonadati</taxon>
        <taxon>Pseudomonadota</taxon>
        <taxon>Gammaproteobacteria</taxon>
        <taxon>Enterobacterales</taxon>
        <taxon>Enterobacteriaceae</taxon>
        <taxon>Escherichia</taxon>
    </lineage>
</organism>
<feature type="chain" id="PRO_1000005748" description="Galactokinase">
    <location>
        <begin position="1"/>
        <end position="382"/>
    </location>
</feature>
<feature type="active site" description="Proton acceptor" evidence="1">
    <location>
        <position position="174"/>
    </location>
</feature>
<feature type="binding site" evidence="1">
    <location>
        <begin position="34"/>
        <end position="37"/>
    </location>
    <ligand>
        <name>substrate</name>
    </ligand>
</feature>
<feature type="binding site" evidence="1">
    <location>
        <begin position="124"/>
        <end position="130"/>
    </location>
    <ligand>
        <name>ATP</name>
        <dbReference type="ChEBI" id="CHEBI:30616"/>
    </ligand>
</feature>
<feature type="binding site" evidence="1">
    <location>
        <position position="130"/>
    </location>
    <ligand>
        <name>Mg(2+)</name>
        <dbReference type="ChEBI" id="CHEBI:18420"/>
    </ligand>
</feature>
<feature type="binding site" evidence="1">
    <location>
        <position position="162"/>
    </location>
    <ligand>
        <name>Mg(2+)</name>
        <dbReference type="ChEBI" id="CHEBI:18420"/>
    </ligand>
</feature>
<feature type="binding site" evidence="1">
    <location>
        <position position="223"/>
    </location>
    <ligand>
        <name>substrate</name>
    </ligand>
</feature>
<feature type="site" description="Transition state stabilizer" evidence="1">
    <location>
        <position position="28"/>
    </location>
</feature>
<evidence type="ECO:0000255" key="1">
    <source>
        <dbReference type="HAMAP-Rule" id="MF_00246"/>
    </source>
</evidence>
<proteinExistence type="inferred from homology"/>